<name>RBL_CHIAL</name>
<proteinExistence type="inferred from homology"/>
<dbReference type="EC" id="4.1.1.39" evidence="1"/>
<dbReference type="EMBL" id="L14394">
    <property type="protein sequence ID" value="AAA19753.1"/>
    <property type="molecule type" value="Genomic_DNA"/>
</dbReference>
<dbReference type="GO" id="GO:0009507">
    <property type="term" value="C:chloroplast"/>
    <property type="evidence" value="ECO:0007669"/>
    <property type="project" value="UniProtKB-SubCell"/>
</dbReference>
<dbReference type="GO" id="GO:0000287">
    <property type="term" value="F:magnesium ion binding"/>
    <property type="evidence" value="ECO:0007669"/>
    <property type="project" value="InterPro"/>
</dbReference>
<dbReference type="GO" id="GO:0004497">
    <property type="term" value="F:monooxygenase activity"/>
    <property type="evidence" value="ECO:0007669"/>
    <property type="project" value="UniProtKB-KW"/>
</dbReference>
<dbReference type="GO" id="GO:0016984">
    <property type="term" value="F:ribulose-bisphosphate carboxylase activity"/>
    <property type="evidence" value="ECO:0007669"/>
    <property type="project" value="UniProtKB-EC"/>
</dbReference>
<dbReference type="GO" id="GO:0009853">
    <property type="term" value="P:photorespiration"/>
    <property type="evidence" value="ECO:0007669"/>
    <property type="project" value="UniProtKB-KW"/>
</dbReference>
<dbReference type="GO" id="GO:0019253">
    <property type="term" value="P:reductive pentose-phosphate cycle"/>
    <property type="evidence" value="ECO:0007669"/>
    <property type="project" value="UniProtKB-KW"/>
</dbReference>
<dbReference type="CDD" id="cd08212">
    <property type="entry name" value="RuBisCO_large_I"/>
    <property type="match status" value="1"/>
</dbReference>
<dbReference type="FunFam" id="3.20.20.110:FF:000001">
    <property type="entry name" value="Ribulose bisphosphate carboxylase large chain"/>
    <property type="match status" value="1"/>
</dbReference>
<dbReference type="FunFam" id="3.30.70.150:FF:000001">
    <property type="entry name" value="Ribulose bisphosphate carboxylase large chain"/>
    <property type="match status" value="1"/>
</dbReference>
<dbReference type="Gene3D" id="3.20.20.110">
    <property type="entry name" value="Ribulose bisphosphate carboxylase, large subunit, C-terminal domain"/>
    <property type="match status" value="1"/>
</dbReference>
<dbReference type="Gene3D" id="3.30.70.150">
    <property type="entry name" value="RuBisCO large subunit, N-terminal domain"/>
    <property type="match status" value="1"/>
</dbReference>
<dbReference type="HAMAP" id="MF_01338">
    <property type="entry name" value="RuBisCO_L_type1"/>
    <property type="match status" value="1"/>
</dbReference>
<dbReference type="InterPro" id="IPR033966">
    <property type="entry name" value="RuBisCO"/>
</dbReference>
<dbReference type="InterPro" id="IPR020878">
    <property type="entry name" value="RuBisCo_large_chain_AS"/>
</dbReference>
<dbReference type="InterPro" id="IPR000685">
    <property type="entry name" value="RuBisCO_lsu_C"/>
</dbReference>
<dbReference type="InterPro" id="IPR036376">
    <property type="entry name" value="RuBisCO_lsu_C_sf"/>
</dbReference>
<dbReference type="InterPro" id="IPR017443">
    <property type="entry name" value="RuBisCO_lsu_fd_N"/>
</dbReference>
<dbReference type="InterPro" id="IPR036422">
    <property type="entry name" value="RuBisCO_lsu_N_sf"/>
</dbReference>
<dbReference type="InterPro" id="IPR020888">
    <property type="entry name" value="RuBisCO_lsuI"/>
</dbReference>
<dbReference type="NCBIfam" id="NF003252">
    <property type="entry name" value="PRK04208.1"/>
    <property type="match status" value="1"/>
</dbReference>
<dbReference type="PANTHER" id="PTHR42704">
    <property type="entry name" value="RIBULOSE BISPHOSPHATE CARBOXYLASE"/>
    <property type="match status" value="1"/>
</dbReference>
<dbReference type="PANTHER" id="PTHR42704:SF15">
    <property type="entry name" value="RIBULOSE BISPHOSPHATE CARBOXYLASE LARGE CHAIN"/>
    <property type="match status" value="1"/>
</dbReference>
<dbReference type="Pfam" id="PF00016">
    <property type="entry name" value="RuBisCO_large"/>
    <property type="match status" value="1"/>
</dbReference>
<dbReference type="Pfam" id="PF02788">
    <property type="entry name" value="RuBisCO_large_N"/>
    <property type="match status" value="1"/>
</dbReference>
<dbReference type="SFLD" id="SFLDG01052">
    <property type="entry name" value="RuBisCO"/>
    <property type="match status" value="1"/>
</dbReference>
<dbReference type="SFLD" id="SFLDS00014">
    <property type="entry name" value="RuBisCO"/>
    <property type="match status" value="1"/>
</dbReference>
<dbReference type="SFLD" id="SFLDG00301">
    <property type="entry name" value="RuBisCO-like_proteins"/>
    <property type="match status" value="1"/>
</dbReference>
<dbReference type="SUPFAM" id="SSF51649">
    <property type="entry name" value="RuBisCo, C-terminal domain"/>
    <property type="match status" value="1"/>
</dbReference>
<dbReference type="SUPFAM" id="SSF54966">
    <property type="entry name" value="RuBisCO, large subunit, small (N-terminal) domain"/>
    <property type="match status" value="1"/>
</dbReference>
<dbReference type="PROSITE" id="PS00157">
    <property type="entry name" value="RUBISCO_LARGE"/>
    <property type="match status" value="1"/>
</dbReference>
<accession>P36484</accession>
<feature type="chain" id="PRO_0000062409" description="Ribulose bisphosphate carboxylase large chain">
    <location>
        <begin position="1" status="less than"/>
        <end position="471"/>
    </location>
</feature>
<feature type="active site" description="Proton acceptor" evidence="1">
    <location>
        <position position="166"/>
    </location>
</feature>
<feature type="active site" description="Proton acceptor" evidence="1">
    <location>
        <position position="285"/>
    </location>
</feature>
<feature type="binding site" description="in homodimeric partner" evidence="1">
    <location>
        <position position="114"/>
    </location>
    <ligand>
        <name>substrate</name>
    </ligand>
</feature>
<feature type="binding site" evidence="1">
    <location>
        <position position="164"/>
    </location>
    <ligand>
        <name>substrate</name>
    </ligand>
</feature>
<feature type="binding site" evidence="1">
    <location>
        <position position="168"/>
    </location>
    <ligand>
        <name>substrate</name>
    </ligand>
</feature>
<feature type="binding site" description="via carbamate group" evidence="1">
    <location>
        <position position="192"/>
    </location>
    <ligand>
        <name>Mg(2+)</name>
        <dbReference type="ChEBI" id="CHEBI:18420"/>
    </ligand>
</feature>
<feature type="binding site" evidence="1">
    <location>
        <position position="194"/>
    </location>
    <ligand>
        <name>Mg(2+)</name>
        <dbReference type="ChEBI" id="CHEBI:18420"/>
    </ligand>
</feature>
<feature type="binding site" evidence="1">
    <location>
        <position position="195"/>
    </location>
    <ligand>
        <name>Mg(2+)</name>
        <dbReference type="ChEBI" id="CHEBI:18420"/>
    </ligand>
</feature>
<feature type="binding site" evidence="1">
    <location>
        <position position="286"/>
    </location>
    <ligand>
        <name>substrate</name>
    </ligand>
</feature>
<feature type="binding site" evidence="1">
    <location>
        <position position="318"/>
    </location>
    <ligand>
        <name>substrate</name>
    </ligand>
</feature>
<feature type="binding site" evidence="1">
    <location>
        <position position="370"/>
    </location>
    <ligand>
        <name>substrate</name>
    </ligand>
</feature>
<feature type="site" description="Transition state stabilizer" evidence="1">
    <location>
        <position position="325"/>
    </location>
</feature>
<feature type="modified residue" description="N6,N6,N6-trimethyllysine" evidence="1">
    <location>
        <position position="5"/>
    </location>
</feature>
<feature type="modified residue" description="N6-carboxylysine" evidence="1">
    <location>
        <position position="192"/>
    </location>
</feature>
<feature type="disulfide bond" description="Interchain; in linked form" evidence="1">
    <location>
        <position position="238"/>
    </location>
</feature>
<feature type="non-terminal residue">
    <location>
        <position position="1"/>
    </location>
</feature>
<protein>
    <recommendedName>
        <fullName evidence="1">Ribulose bisphosphate carboxylase large chain</fullName>
        <shortName evidence="1">RuBisCO large subunit</shortName>
        <ecNumber evidence="1">4.1.1.39</ecNumber>
    </recommendedName>
</protein>
<gene>
    <name evidence="1" type="primary">rbcL</name>
</gene>
<geneLocation type="chloroplast"/>
<reference key="1">
    <citation type="journal article" date="1993" name="Ann. Mo. Bot. Gard.">
        <title>A parsimony analysis of the Asteridae sensu lato based on rbcL sequences.</title>
        <authorList>
            <person name="Olmstead R.G."/>
            <person name="Bremer B."/>
            <person name="Scott K.M."/>
            <person name="Palmer J.D."/>
        </authorList>
        <dbReference type="AGRICOLA" id="IND93053816"/>
    </citation>
    <scope>NUCLEOTIDE SEQUENCE [GENOMIC DNA]</scope>
</reference>
<sequence>SVGFKAGVKEYKLTYYTPEYETKDTDILAAFRVTPQPGVPPEEAGAAVAAESSTGTWTTVWTDGLTSLDRYKGRCYGIEPVPGEEDQYIAYVAYPLDLFEEGSVTNMFTSIVGNVFGFKALRALRLEDLRIPTAYIKTFQGPPHAIQVERDKLNKYGRPLLGCTIKPKLGLSAKNYGRAVYECLRGGLDFTKDDENVNSQPFMRWRDRFLFCAEALYKAQAETGEIKGHYLNATAGTCEEMIKRAVFARELGVPIVMHDYLTGGFTANTSLAHYCRDNGLLLHIHRAMHAVIDRQKNHGMHFRVLAKALRLSGGDHXHAGTVVGKLXGERDITLGFVDLLRDDFIDKDRSRGIYFTQDWVSLPGVLPVRSGGIHVWHMPALTEIFGDDAVLQFGGGTLGHPWGNAPGAVANRVALEACVKARNEGRDLAVEGNEIIREASKWSPELAAACEGWKAIRFNFKAVDTLDKPSS</sequence>
<comment type="function">
    <text evidence="1">RuBisCO catalyzes two reactions: the carboxylation of D-ribulose 1,5-bisphosphate, the primary event in carbon dioxide fixation, as well as the oxidative fragmentation of the pentose substrate in the photorespiration process. Both reactions occur simultaneously and in competition at the same active site.</text>
</comment>
<comment type="catalytic activity">
    <reaction evidence="1">
        <text>2 (2R)-3-phosphoglycerate + 2 H(+) = D-ribulose 1,5-bisphosphate + CO2 + H2O</text>
        <dbReference type="Rhea" id="RHEA:23124"/>
        <dbReference type="ChEBI" id="CHEBI:15377"/>
        <dbReference type="ChEBI" id="CHEBI:15378"/>
        <dbReference type="ChEBI" id="CHEBI:16526"/>
        <dbReference type="ChEBI" id="CHEBI:57870"/>
        <dbReference type="ChEBI" id="CHEBI:58272"/>
        <dbReference type="EC" id="4.1.1.39"/>
    </reaction>
</comment>
<comment type="catalytic activity">
    <reaction evidence="1">
        <text>D-ribulose 1,5-bisphosphate + O2 = 2-phosphoglycolate + (2R)-3-phosphoglycerate + 2 H(+)</text>
        <dbReference type="Rhea" id="RHEA:36631"/>
        <dbReference type="ChEBI" id="CHEBI:15378"/>
        <dbReference type="ChEBI" id="CHEBI:15379"/>
        <dbReference type="ChEBI" id="CHEBI:57870"/>
        <dbReference type="ChEBI" id="CHEBI:58033"/>
        <dbReference type="ChEBI" id="CHEBI:58272"/>
    </reaction>
</comment>
<comment type="cofactor">
    <cofactor evidence="1">
        <name>Mg(2+)</name>
        <dbReference type="ChEBI" id="CHEBI:18420"/>
    </cofactor>
    <text evidence="1">Binds 1 Mg(2+) ion per subunit.</text>
</comment>
<comment type="subunit">
    <text evidence="1">Heterohexadecamer of 8 large chains and 8 small chains; disulfide-linked. The disulfide link is formed within the large subunit homodimers.</text>
</comment>
<comment type="subcellular location">
    <subcellularLocation>
        <location>Plastid</location>
        <location>Chloroplast</location>
    </subcellularLocation>
</comment>
<comment type="PTM">
    <text evidence="1">The disulfide bond which can form in the large chain dimeric partners within the hexadecamer appears to be associated with oxidative stress and protein turnover.</text>
</comment>
<comment type="miscellaneous">
    <text evidence="1">The basic functional RuBisCO is composed of a large chain homodimer in a 'head-to-tail' conformation. In form I RuBisCO this homodimer is arranged in a barrel-like tetramer with the small subunits forming a tetrameric 'cap' on each end of the 'barrel'.</text>
</comment>
<comment type="similarity">
    <text evidence="1">Belongs to the RuBisCO large chain family. Type I subfamily.</text>
</comment>
<keyword id="KW-0113">Calvin cycle</keyword>
<keyword id="KW-0120">Carbon dioxide fixation</keyword>
<keyword id="KW-0150">Chloroplast</keyword>
<keyword id="KW-1015">Disulfide bond</keyword>
<keyword id="KW-0456">Lyase</keyword>
<keyword id="KW-0460">Magnesium</keyword>
<keyword id="KW-0479">Metal-binding</keyword>
<keyword id="KW-0488">Methylation</keyword>
<keyword id="KW-0503">Monooxygenase</keyword>
<keyword id="KW-0560">Oxidoreductase</keyword>
<keyword id="KW-0601">Photorespiration</keyword>
<keyword id="KW-0602">Photosynthesis</keyword>
<keyword id="KW-0934">Plastid</keyword>
<evidence type="ECO:0000255" key="1">
    <source>
        <dbReference type="HAMAP-Rule" id="MF_01338"/>
    </source>
</evidence>
<organism>
    <name type="scientific">Chiococca alba</name>
    <name type="common">West Indian milkberry</name>
    <name type="synonym">Lonicera alba</name>
    <dbReference type="NCBI Taxonomy" id="28527"/>
    <lineage>
        <taxon>Eukaryota</taxon>
        <taxon>Viridiplantae</taxon>
        <taxon>Streptophyta</taxon>
        <taxon>Embryophyta</taxon>
        <taxon>Tracheophyta</taxon>
        <taxon>Spermatophyta</taxon>
        <taxon>Magnoliopsida</taxon>
        <taxon>eudicotyledons</taxon>
        <taxon>Gunneridae</taxon>
        <taxon>Pentapetalae</taxon>
        <taxon>asterids</taxon>
        <taxon>lamiids</taxon>
        <taxon>Gentianales</taxon>
        <taxon>Rubiaceae</taxon>
        <taxon>Cinchonoideae</taxon>
        <taxon>Chiococceae</taxon>
        <taxon>Chiococca</taxon>
    </lineage>
</organism>